<accession>Q0MQH9</accession>
<name>NDUS7_GORGO</name>
<gene>
    <name type="primary">NDUFS7</name>
</gene>
<reference key="1">
    <citation type="journal article" date="2006" name="Gene">
        <title>Adaptive selection of mitochondrial complex I subunits during primate radiation.</title>
        <authorList>
            <person name="Mishmar D."/>
            <person name="Ruiz-Pesini E."/>
            <person name="Mondragon-Palomino M."/>
            <person name="Procaccio V."/>
            <person name="Gaut B."/>
            <person name="Wallace D.C."/>
        </authorList>
    </citation>
    <scope>NUCLEOTIDE SEQUENCE [MRNA]</scope>
</reference>
<feature type="transit peptide" description="Mitochondrion" evidence="2">
    <location>
        <begin position="1"/>
        <end position="38"/>
    </location>
</feature>
<feature type="chain" id="PRO_0000251872" description="NADH dehydrogenase [ubiquinone] iron-sulfur protein 7, mitochondrial">
    <location>
        <begin position="39"/>
        <end position="213"/>
    </location>
</feature>
<feature type="region of interest" description="Disordered" evidence="4">
    <location>
        <begin position="32"/>
        <end position="53"/>
    </location>
</feature>
<feature type="compositionally biased region" description="Polar residues" evidence="4">
    <location>
        <begin position="33"/>
        <end position="44"/>
    </location>
</feature>
<feature type="binding site" evidence="3">
    <location>
        <position position="88"/>
    </location>
    <ligand>
        <name>[4Fe-4S] cluster</name>
        <dbReference type="ChEBI" id="CHEBI:49883"/>
    </ligand>
</feature>
<feature type="binding site" evidence="3">
    <location>
        <position position="89"/>
    </location>
    <ligand>
        <name>[4Fe-4S] cluster</name>
        <dbReference type="ChEBI" id="CHEBI:49883"/>
    </ligand>
</feature>
<feature type="binding site" evidence="3">
    <location>
        <position position="153"/>
    </location>
    <ligand>
        <name>[4Fe-4S] cluster</name>
        <dbReference type="ChEBI" id="CHEBI:49883"/>
    </ligand>
</feature>
<feature type="binding site" evidence="3">
    <location>
        <position position="183"/>
    </location>
    <ligand>
        <name>[4Fe-4S] cluster</name>
        <dbReference type="ChEBI" id="CHEBI:49883"/>
    </ligand>
</feature>
<feature type="modified residue" description="Hydroxyarginine" evidence="2">
    <location>
        <position position="111"/>
    </location>
</feature>
<dbReference type="EC" id="7.1.1.2" evidence="1"/>
<dbReference type="EMBL" id="DQ885655">
    <property type="protein sequence ID" value="ABH12164.1"/>
    <property type="molecule type" value="mRNA"/>
</dbReference>
<dbReference type="RefSeq" id="NP_001266514.1">
    <property type="nucleotide sequence ID" value="NM_001279585.1"/>
</dbReference>
<dbReference type="SMR" id="Q0MQH9"/>
<dbReference type="FunCoup" id="Q0MQH9">
    <property type="interactions" value="940"/>
</dbReference>
<dbReference type="STRING" id="9593.ENSGGOP00000029511"/>
<dbReference type="GeneID" id="101149494"/>
<dbReference type="KEGG" id="ggo:101149494"/>
<dbReference type="CTD" id="374291"/>
<dbReference type="eggNOG" id="KOG1687">
    <property type="taxonomic scope" value="Eukaryota"/>
</dbReference>
<dbReference type="HOGENOM" id="CLU_055737_1_2_1"/>
<dbReference type="InParanoid" id="Q0MQH9"/>
<dbReference type="OrthoDB" id="16466at9604"/>
<dbReference type="Proteomes" id="UP000001519">
    <property type="component" value="Unplaced"/>
</dbReference>
<dbReference type="GO" id="GO:0005743">
    <property type="term" value="C:mitochondrial inner membrane"/>
    <property type="evidence" value="ECO:0000250"/>
    <property type="project" value="UniProtKB"/>
</dbReference>
<dbReference type="GO" id="GO:0045271">
    <property type="term" value="C:respiratory chain complex I"/>
    <property type="evidence" value="ECO:0000250"/>
    <property type="project" value="UniProtKB"/>
</dbReference>
<dbReference type="GO" id="GO:0051539">
    <property type="term" value="F:4 iron, 4 sulfur cluster binding"/>
    <property type="evidence" value="ECO:0007669"/>
    <property type="project" value="UniProtKB-KW"/>
</dbReference>
<dbReference type="GO" id="GO:0046872">
    <property type="term" value="F:metal ion binding"/>
    <property type="evidence" value="ECO:0007669"/>
    <property type="project" value="UniProtKB-KW"/>
</dbReference>
<dbReference type="GO" id="GO:0008137">
    <property type="term" value="F:NADH dehydrogenase (ubiquinone) activity"/>
    <property type="evidence" value="ECO:0000250"/>
    <property type="project" value="UniProtKB"/>
</dbReference>
<dbReference type="GO" id="GO:0048038">
    <property type="term" value="F:quinone binding"/>
    <property type="evidence" value="ECO:0007669"/>
    <property type="project" value="InterPro"/>
</dbReference>
<dbReference type="GO" id="GO:0009060">
    <property type="term" value="P:aerobic respiration"/>
    <property type="evidence" value="ECO:0000318"/>
    <property type="project" value="GO_Central"/>
</dbReference>
<dbReference type="GO" id="GO:0015990">
    <property type="term" value="P:electron transport coupled proton transport"/>
    <property type="evidence" value="ECO:0000318"/>
    <property type="project" value="GO_Central"/>
</dbReference>
<dbReference type="GO" id="GO:0006120">
    <property type="term" value="P:mitochondrial electron transport, NADH to ubiquinone"/>
    <property type="evidence" value="ECO:0000250"/>
    <property type="project" value="UniProtKB"/>
</dbReference>
<dbReference type="GO" id="GO:0032981">
    <property type="term" value="P:mitochondrial respiratory chain complex I assembly"/>
    <property type="evidence" value="ECO:0000250"/>
    <property type="project" value="UniProtKB"/>
</dbReference>
<dbReference type="FunFam" id="3.40.50.12280:FF:000001">
    <property type="entry name" value="NADH-quinone oxidoreductase subunit B 2"/>
    <property type="match status" value="1"/>
</dbReference>
<dbReference type="Gene3D" id="3.40.50.12280">
    <property type="match status" value="1"/>
</dbReference>
<dbReference type="HAMAP" id="MF_01356">
    <property type="entry name" value="NDH1_NuoB"/>
    <property type="match status" value="1"/>
</dbReference>
<dbReference type="InterPro" id="IPR006137">
    <property type="entry name" value="NADH_UbQ_OxRdtase-like_20kDa"/>
</dbReference>
<dbReference type="InterPro" id="IPR006138">
    <property type="entry name" value="NADH_UQ_OxRdtase_20Kd_su"/>
</dbReference>
<dbReference type="NCBIfam" id="TIGR01957">
    <property type="entry name" value="nuoB_fam"/>
    <property type="match status" value="1"/>
</dbReference>
<dbReference type="NCBIfam" id="NF005012">
    <property type="entry name" value="PRK06411.1"/>
    <property type="match status" value="1"/>
</dbReference>
<dbReference type="PANTHER" id="PTHR11995">
    <property type="entry name" value="NADH DEHYDROGENASE"/>
    <property type="match status" value="1"/>
</dbReference>
<dbReference type="PANTHER" id="PTHR11995:SF22">
    <property type="entry name" value="NADH DEHYDROGENASE [UBIQUINONE] IRON-SULFUR PROTEIN 7, MITOCHONDRIAL"/>
    <property type="match status" value="1"/>
</dbReference>
<dbReference type="Pfam" id="PF01058">
    <property type="entry name" value="Oxidored_q6"/>
    <property type="match status" value="1"/>
</dbReference>
<dbReference type="SUPFAM" id="SSF56770">
    <property type="entry name" value="HydA/Nqo6-like"/>
    <property type="match status" value="1"/>
</dbReference>
<dbReference type="PROSITE" id="PS01150">
    <property type="entry name" value="COMPLEX1_20K"/>
    <property type="match status" value="1"/>
</dbReference>
<evidence type="ECO:0000250" key="1">
    <source>
        <dbReference type="UniProtKB" id="O75251"/>
    </source>
</evidence>
<evidence type="ECO:0000250" key="2">
    <source>
        <dbReference type="UniProtKB" id="P42026"/>
    </source>
</evidence>
<evidence type="ECO:0000255" key="3"/>
<evidence type="ECO:0000256" key="4">
    <source>
        <dbReference type="SAM" id="MobiDB-lite"/>
    </source>
</evidence>
<evidence type="ECO:0000305" key="5"/>
<protein>
    <recommendedName>
        <fullName>NADH dehydrogenase [ubiquinone] iron-sulfur protein 7, mitochondrial</fullName>
        <ecNumber evidence="1">7.1.1.2</ecNumber>
    </recommendedName>
    <alternativeName>
        <fullName>Complex I-20kD</fullName>
        <shortName>CI-20kD</shortName>
    </alternativeName>
    <alternativeName>
        <fullName>NADH-ubiquinone oxidoreductase 20 kDa subunit</fullName>
    </alternativeName>
</protein>
<keyword id="KW-0004">4Fe-4S</keyword>
<keyword id="KW-0249">Electron transport</keyword>
<keyword id="KW-0379">Hydroxylation</keyword>
<keyword id="KW-0408">Iron</keyword>
<keyword id="KW-0411">Iron-sulfur</keyword>
<keyword id="KW-0472">Membrane</keyword>
<keyword id="KW-0479">Metal-binding</keyword>
<keyword id="KW-0496">Mitochondrion</keyword>
<keyword id="KW-0999">Mitochondrion inner membrane</keyword>
<keyword id="KW-0520">NAD</keyword>
<keyword id="KW-0560">Oxidoreductase</keyword>
<keyword id="KW-1185">Reference proteome</keyword>
<keyword id="KW-0679">Respiratory chain</keyword>
<keyword id="KW-0809">Transit peptide</keyword>
<keyword id="KW-1278">Translocase</keyword>
<keyword id="KW-0813">Transport</keyword>
<keyword id="KW-0830">Ubiquinone</keyword>
<comment type="function">
    <text evidence="1">Core subunit of the mitochondrial membrane respiratory chain NADH dehydrogenase (Complex I) which catalyzes electron transfer from NADH through the respiratory chain, using ubiquinone as an electron acceptor. Essential for the catalytic activity of complex I.</text>
</comment>
<comment type="catalytic activity">
    <reaction evidence="1">
        <text>a ubiquinone + NADH + 5 H(+)(in) = a ubiquinol + NAD(+) + 4 H(+)(out)</text>
        <dbReference type="Rhea" id="RHEA:29091"/>
        <dbReference type="Rhea" id="RHEA-COMP:9565"/>
        <dbReference type="Rhea" id="RHEA-COMP:9566"/>
        <dbReference type="ChEBI" id="CHEBI:15378"/>
        <dbReference type="ChEBI" id="CHEBI:16389"/>
        <dbReference type="ChEBI" id="CHEBI:17976"/>
        <dbReference type="ChEBI" id="CHEBI:57540"/>
        <dbReference type="ChEBI" id="CHEBI:57945"/>
        <dbReference type="EC" id="7.1.1.2"/>
    </reaction>
</comment>
<comment type="cofactor">
    <cofactor evidence="5">
        <name>[4Fe-4S] cluster</name>
        <dbReference type="ChEBI" id="CHEBI:49883"/>
    </cofactor>
    <text evidence="5">Binds 1 [4Fe-4S] cluster.</text>
</comment>
<comment type="subunit">
    <text evidence="2">Core subunit of respiratory chain NADH dehydrogenase (Complex I) which is composed of 45 different subunits (By similarity). This is a component of the iron-sulfur (IP) fragment of the enzyme (By similarity).</text>
</comment>
<comment type="subcellular location">
    <subcellularLocation>
        <location evidence="2">Mitochondrion inner membrane</location>
        <topology evidence="2">Peripheral membrane protein</topology>
        <orientation evidence="2">Matrix side</orientation>
    </subcellularLocation>
</comment>
<comment type="PTM">
    <text evidence="1">Hydroxylated ar Arg-111 by NDUFAF5 early in the pathway of assembly of complex I, before the formation of the juncture between peripheral and membrane arms.</text>
</comment>
<comment type="similarity">
    <text evidence="5">Belongs to the complex I 20 kDa subunit family.</text>
</comment>
<organism>
    <name type="scientific">Gorilla gorilla gorilla</name>
    <name type="common">Western lowland gorilla</name>
    <dbReference type="NCBI Taxonomy" id="9595"/>
    <lineage>
        <taxon>Eukaryota</taxon>
        <taxon>Metazoa</taxon>
        <taxon>Chordata</taxon>
        <taxon>Craniata</taxon>
        <taxon>Vertebrata</taxon>
        <taxon>Euteleostomi</taxon>
        <taxon>Mammalia</taxon>
        <taxon>Eutheria</taxon>
        <taxon>Euarchontoglires</taxon>
        <taxon>Primates</taxon>
        <taxon>Haplorrhini</taxon>
        <taxon>Catarrhini</taxon>
        <taxon>Hominidae</taxon>
        <taxon>Gorilla</taxon>
    </lineage>
</organism>
<sequence length="213" mass="23486">MAALSAPGLCGFRILGLRSSVGTAVQARGVHQSVATDGPSSTQPALPKARAVAPKPSSRGEYVVAKLDDLVNWARRSSLWPMTFGLACCAVEMMHMAAPRYDMDRFGVVFRASPRQSDVMIVAGTLTNKMAPALRKVYDQMPEPRYVVSMGSCANGGGYYHYSYSVVRGCDRIVPVDIYIPGCPPTAEALLYGILQLQRKIKRERRLQIWYRR</sequence>
<proteinExistence type="evidence at transcript level"/>